<name>Y323A_MYCGE</name>
<accession>Q9ZB74</accession>
<gene>
    <name type="ordered locus">MG323.1</name>
</gene>
<proteinExistence type="predicted"/>
<comment type="subcellular location">
    <subcellularLocation>
        <location evidence="2">Cell membrane</location>
        <topology evidence="2">Multi-pass membrane protein</topology>
    </subcellularLocation>
</comment>
<dbReference type="EMBL" id="L43967">
    <property type="protein sequence ID" value="AAC71548.1"/>
    <property type="molecule type" value="Genomic_DNA"/>
</dbReference>
<dbReference type="RefSeq" id="WP_009885959.1">
    <property type="nucleotide sequence ID" value="NC_000908.2"/>
</dbReference>
<dbReference type="SMR" id="Q9ZB74"/>
<dbReference type="STRING" id="243273.MG_515"/>
<dbReference type="GeneID" id="88282496"/>
<dbReference type="KEGG" id="mge:MG_515"/>
<dbReference type="eggNOG" id="ENOG5031Z6D">
    <property type="taxonomic scope" value="Bacteria"/>
</dbReference>
<dbReference type="HOGENOM" id="CLU_1141577_0_0_14"/>
<dbReference type="InParanoid" id="Q9ZB74"/>
<dbReference type="Proteomes" id="UP000000807">
    <property type="component" value="Chromosome"/>
</dbReference>
<dbReference type="GO" id="GO:0005886">
    <property type="term" value="C:plasma membrane"/>
    <property type="evidence" value="ECO:0007669"/>
    <property type="project" value="UniProtKB-SubCell"/>
</dbReference>
<organism>
    <name type="scientific">Mycoplasma genitalium (strain ATCC 33530 / DSM 19775 / NCTC 10195 / G37)</name>
    <name type="common">Mycoplasmoides genitalium</name>
    <dbReference type="NCBI Taxonomy" id="243273"/>
    <lineage>
        <taxon>Bacteria</taxon>
        <taxon>Bacillati</taxon>
        <taxon>Mycoplasmatota</taxon>
        <taxon>Mycoplasmoidales</taxon>
        <taxon>Mycoplasmoidaceae</taxon>
        <taxon>Mycoplasmoides</taxon>
    </lineage>
</organism>
<evidence type="ECO:0000255" key="1"/>
<evidence type="ECO:0000305" key="2"/>
<protein>
    <recommendedName>
        <fullName>Uncharacterized protein MG323.1</fullName>
    </recommendedName>
</protein>
<feature type="chain" id="PRO_0000210541" description="Uncharacterized protein MG323.1">
    <location>
        <begin position="1"/>
        <end position="269"/>
    </location>
</feature>
<feature type="transmembrane region" description="Helical" evidence="1">
    <location>
        <begin position="64"/>
        <end position="84"/>
    </location>
</feature>
<feature type="transmembrane region" description="Helical" evidence="1">
    <location>
        <begin position="125"/>
        <end position="145"/>
    </location>
</feature>
<feature type="transmembrane region" description="Helical" evidence="1">
    <location>
        <begin position="169"/>
        <end position="189"/>
    </location>
</feature>
<feature type="transmembrane region" description="Helical" evidence="1">
    <location>
        <begin position="230"/>
        <end position="250"/>
    </location>
</feature>
<sequence>MLKKKNQFDYLNLSHVLSKKKNSGGGWINKISDKLSEINVAEYQVVSKHSNYLFYSRFGLLDTFVYFLFFLCFFLNNVLFLAGVFHTKQFTFNEVNGFNQFYLFWTVEKPTDIIQASITYQISQYGIANLVFGLISLALLVFLSFRWTVSLFFKSQTTKWERIGYTTGFFISIVVYLLWILLMVLFLVLLDQQFFERDTQKIQSATRFSLFFNVENNNGVYLSKLNSFGVFATAWAISLVFYSFFFIAIFAFNYNKTKLKQLFKKSKAK</sequence>
<keyword id="KW-1003">Cell membrane</keyword>
<keyword id="KW-0472">Membrane</keyword>
<keyword id="KW-1185">Reference proteome</keyword>
<keyword id="KW-0812">Transmembrane</keyword>
<keyword id="KW-1133">Transmembrane helix</keyword>
<reference key="1">
    <citation type="journal article" date="1995" name="Science">
        <title>The minimal gene complement of Mycoplasma genitalium.</title>
        <authorList>
            <person name="Fraser C.M."/>
            <person name="Gocayne J.D."/>
            <person name="White O."/>
            <person name="Adams M.D."/>
            <person name="Clayton R.A."/>
            <person name="Fleischmann R.D."/>
            <person name="Bult C.J."/>
            <person name="Kerlavage A.R."/>
            <person name="Sutton G.G."/>
            <person name="Kelley J.M."/>
            <person name="Fritchman J.L."/>
            <person name="Weidman J.F."/>
            <person name="Small K.V."/>
            <person name="Sandusky M."/>
            <person name="Fuhrmann J.L."/>
            <person name="Nguyen D.T."/>
            <person name="Utterback T.R."/>
            <person name="Saudek D.M."/>
            <person name="Phillips C.A."/>
            <person name="Merrick J.M."/>
            <person name="Tomb J.-F."/>
            <person name="Dougherty B.A."/>
            <person name="Bott K.F."/>
            <person name="Hu P.-C."/>
            <person name="Lucier T.S."/>
            <person name="Peterson S.N."/>
            <person name="Smith H.O."/>
            <person name="Hutchison C.A. III"/>
            <person name="Venter J.C."/>
        </authorList>
    </citation>
    <scope>NUCLEOTIDE SEQUENCE [LARGE SCALE GENOMIC DNA]</scope>
    <source>
        <strain>ATCC 33530 / DSM 19775 / NCTC 10195 / G37</strain>
    </source>
</reference>
<reference key="2">
    <citation type="submission" date="1998-10" db="EMBL/GenBank/DDBJ databases">
        <authorList>
            <person name="Fraser C.M."/>
            <person name="Gocayne J.D."/>
            <person name="White O."/>
            <person name="Adams M.D."/>
            <person name="Clayton R.A."/>
            <person name="Fleischmann R.D."/>
            <person name="Bult C.J."/>
            <person name="Kerlavage A.R."/>
            <person name="Sutton G.G."/>
            <person name="Kelley J.M."/>
            <person name="Fritchman J.L."/>
            <person name="Weidman J.F."/>
            <person name="Small K.V."/>
            <person name="Sandusky M."/>
            <person name="Fuhrmann J.L."/>
            <person name="Nguyen D.T."/>
            <person name="Utterback T.R."/>
            <person name="Saudek D.M."/>
            <person name="Phillips C.A."/>
            <person name="Merrick J.M."/>
            <person name="Tomb J.-F."/>
            <person name="Dougherty B.A."/>
            <person name="Bott K.F."/>
            <person name="Hu P.-C."/>
            <person name="Lucier T.S."/>
            <person name="Peterson S.N."/>
            <person name="Smith H.O."/>
            <person name="Hutchison C.A. III"/>
            <person name="Venter J.C."/>
        </authorList>
    </citation>
    <scope>IDENTIFICATION</scope>
</reference>